<gene>
    <name type="primary">yeaQ</name>
    <name type="ordered locus">c2200</name>
</gene>
<keyword id="KW-0997">Cell inner membrane</keyword>
<keyword id="KW-1003">Cell membrane</keyword>
<keyword id="KW-0472">Membrane</keyword>
<keyword id="KW-1185">Reference proteome</keyword>
<keyword id="KW-0812">Transmembrane</keyword>
<keyword id="KW-1133">Transmembrane helix</keyword>
<proteinExistence type="inferred from homology"/>
<evidence type="ECO:0000255" key="1"/>
<evidence type="ECO:0000305" key="2"/>
<reference key="1">
    <citation type="journal article" date="2002" name="Proc. Natl. Acad. Sci. U.S.A.">
        <title>Extensive mosaic structure revealed by the complete genome sequence of uropathogenic Escherichia coli.</title>
        <authorList>
            <person name="Welch R.A."/>
            <person name="Burland V."/>
            <person name="Plunkett G. III"/>
            <person name="Redford P."/>
            <person name="Roesch P."/>
            <person name="Rasko D."/>
            <person name="Buckles E.L."/>
            <person name="Liou S.-R."/>
            <person name="Boutin A."/>
            <person name="Hackett J."/>
            <person name="Stroud D."/>
            <person name="Mayhew G.F."/>
            <person name="Rose D.J."/>
            <person name="Zhou S."/>
            <person name="Schwartz D.C."/>
            <person name="Perna N.T."/>
            <person name="Mobley H.L.T."/>
            <person name="Donnenberg M.S."/>
            <person name="Blattner F.R."/>
        </authorList>
    </citation>
    <scope>NUCLEOTIDE SEQUENCE [LARGE SCALE GENOMIC DNA]</scope>
    <source>
        <strain>CFT073 / ATCC 700928 / UPEC</strain>
    </source>
</reference>
<name>YEAQ_ECOL6</name>
<feature type="chain" id="PRO_0000169027" description="UPF0410 protein YeaQ">
    <location>
        <begin position="1"/>
        <end position="82"/>
    </location>
</feature>
<feature type="transmembrane region" description="Helical" evidence="1">
    <location>
        <begin position="26"/>
        <end position="46"/>
    </location>
</feature>
<feature type="transmembrane region" description="Helical" evidence="1">
    <location>
        <begin position="57"/>
        <end position="77"/>
    </location>
</feature>
<comment type="subcellular location">
    <subcellularLocation>
        <location evidence="2">Cell inner membrane</location>
        <topology evidence="2">Multi-pass membrane protein</topology>
    </subcellularLocation>
</comment>
<comment type="similarity">
    <text evidence="2">Belongs to the UPF0410 family.</text>
</comment>
<organism>
    <name type="scientific">Escherichia coli O6:H1 (strain CFT073 / ATCC 700928 / UPEC)</name>
    <dbReference type="NCBI Taxonomy" id="199310"/>
    <lineage>
        <taxon>Bacteria</taxon>
        <taxon>Pseudomonadati</taxon>
        <taxon>Pseudomonadota</taxon>
        <taxon>Gammaproteobacteria</taxon>
        <taxon>Enterobacterales</taxon>
        <taxon>Enterobacteriaceae</taxon>
        <taxon>Escherichia</taxon>
    </lineage>
</organism>
<sequence length="82" mass="8671">MGILSWIIFGLIAGILAKWIMPGKDGGGFFMTILLGIVGAVVGGWISTLFGFGKVDGFNFGSFVVAVIGAIVVLFIYRKIKS</sequence>
<accession>P64486</accession>
<accession>P76246</accession>
<protein>
    <recommendedName>
        <fullName>UPF0410 protein YeaQ</fullName>
    </recommendedName>
</protein>
<dbReference type="EMBL" id="AE014075">
    <property type="protein sequence ID" value="AAN80659.1"/>
    <property type="molecule type" value="Genomic_DNA"/>
</dbReference>
<dbReference type="RefSeq" id="WP_000512153.1">
    <property type="nucleotide sequence ID" value="NZ_CP051263.1"/>
</dbReference>
<dbReference type="SMR" id="P64486"/>
<dbReference type="STRING" id="199310.c2200"/>
<dbReference type="KEGG" id="ecc:c2200"/>
<dbReference type="eggNOG" id="COG2261">
    <property type="taxonomic scope" value="Bacteria"/>
</dbReference>
<dbReference type="HOGENOM" id="CLU_160040_2_3_6"/>
<dbReference type="BioCyc" id="ECOL199310:C2200-MONOMER"/>
<dbReference type="Proteomes" id="UP000001410">
    <property type="component" value="Chromosome"/>
</dbReference>
<dbReference type="GO" id="GO:0005886">
    <property type="term" value="C:plasma membrane"/>
    <property type="evidence" value="ECO:0007669"/>
    <property type="project" value="UniProtKB-SubCell"/>
</dbReference>
<dbReference type="InterPro" id="IPR007341">
    <property type="entry name" value="Transgly_assoc"/>
</dbReference>
<dbReference type="NCBIfam" id="NF007771">
    <property type="entry name" value="PRK10457.1"/>
    <property type="match status" value="1"/>
</dbReference>
<dbReference type="PANTHER" id="PTHR33884:SF4">
    <property type="entry name" value="UPF0410 PROTEIN YEAQ"/>
    <property type="match status" value="1"/>
</dbReference>
<dbReference type="PANTHER" id="PTHR33884">
    <property type="entry name" value="UPF0410 PROTEIN YMGE"/>
    <property type="match status" value="1"/>
</dbReference>
<dbReference type="Pfam" id="PF04226">
    <property type="entry name" value="Transgly_assoc"/>
    <property type="match status" value="1"/>
</dbReference>